<name>TRAR_AGRVI</name>
<evidence type="ECO:0000255" key="1">
    <source>
        <dbReference type="PROSITE-ProRule" id="PRU00411"/>
    </source>
</evidence>
<evidence type="ECO:0000305" key="2"/>
<geneLocation type="plasmid">
    <name>pTi2608</name>
</geneLocation>
<proteinExistence type="inferred from homology"/>
<protein>
    <recommendedName>
        <fullName>Transcriptional activator protein TraR</fullName>
    </recommendedName>
</protein>
<feature type="chain" id="PRO_0000184193" description="Transcriptional activator protein TraR">
    <location>
        <begin position="1"/>
        <end position="234"/>
    </location>
</feature>
<feature type="domain" description="HTH luxR-type" evidence="1">
    <location>
        <begin position="167"/>
        <end position="232"/>
    </location>
</feature>
<feature type="DNA-binding region" description="H-T-H motif" evidence="1">
    <location>
        <begin position="191"/>
        <end position="210"/>
    </location>
</feature>
<feature type="sequence variant">
    <original>K</original>
    <variation>R</variation>
    <location>
        <position position="230"/>
    </location>
</feature>
<dbReference type="EMBL" id="Z22732">
    <property type="protein sequence ID" value="CAA80423.1"/>
    <property type="molecule type" value="Genomic_DNA"/>
</dbReference>
<dbReference type="EMBL" id="Z22733">
    <property type="protein sequence ID" value="CAA80425.1"/>
    <property type="molecule type" value="Genomic_DNA"/>
</dbReference>
<dbReference type="EMBL" id="Z22734">
    <property type="protein sequence ID" value="CAA80427.1"/>
    <property type="molecule type" value="Genomic_DNA"/>
</dbReference>
<dbReference type="PIR" id="S37463">
    <property type="entry name" value="S37463"/>
</dbReference>
<dbReference type="RefSeq" id="WP_060716482.1">
    <property type="nucleotide sequence ID" value="NZ_LMVL02000009.1"/>
</dbReference>
<dbReference type="SMR" id="P33909"/>
<dbReference type="GeneID" id="60684590"/>
<dbReference type="OrthoDB" id="9803630at2"/>
<dbReference type="GO" id="GO:0003677">
    <property type="term" value="F:DNA binding"/>
    <property type="evidence" value="ECO:0007669"/>
    <property type="project" value="UniProtKB-KW"/>
</dbReference>
<dbReference type="GO" id="GO:0009372">
    <property type="term" value="P:quorum sensing"/>
    <property type="evidence" value="ECO:0007669"/>
    <property type="project" value="UniProtKB-KW"/>
</dbReference>
<dbReference type="GO" id="GO:0006355">
    <property type="term" value="P:regulation of DNA-templated transcription"/>
    <property type="evidence" value="ECO:0007669"/>
    <property type="project" value="InterPro"/>
</dbReference>
<dbReference type="CDD" id="cd06170">
    <property type="entry name" value="LuxR_C_like"/>
    <property type="match status" value="1"/>
</dbReference>
<dbReference type="Gene3D" id="3.30.450.80">
    <property type="entry name" value="Transcription factor LuxR-like, autoinducer-binding domain"/>
    <property type="match status" value="1"/>
</dbReference>
<dbReference type="Gene3D" id="1.10.10.10">
    <property type="entry name" value="Winged helix-like DNA-binding domain superfamily/Winged helix DNA-binding domain"/>
    <property type="match status" value="1"/>
</dbReference>
<dbReference type="InterPro" id="IPR016032">
    <property type="entry name" value="Sig_transdc_resp-reg_C-effctor"/>
</dbReference>
<dbReference type="InterPro" id="IPR005143">
    <property type="entry name" value="TF_LuxR_autoind-bd_dom"/>
</dbReference>
<dbReference type="InterPro" id="IPR036693">
    <property type="entry name" value="TF_LuxR_autoind-bd_dom_sf"/>
</dbReference>
<dbReference type="InterPro" id="IPR000792">
    <property type="entry name" value="Tscrpt_reg_LuxR_C"/>
</dbReference>
<dbReference type="InterPro" id="IPR036388">
    <property type="entry name" value="WH-like_DNA-bd_sf"/>
</dbReference>
<dbReference type="NCBIfam" id="NF010444">
    <property type="entry name" value="PRK13870.1"/>
    <property type="match status" value="1"/>
</dbReference>
<dbReference type="Pfam" id="PF03472">
    <property type="entry name" value="Autoind_bind"/>
    <property type="match status" value="1"/>
</dbReference>
<dbReference type="Pfam" id="PF00196">
    <property type="entry name" value="GerE"/>
    <property type="match status" value="1"/>
</dbReference>
<dbReference type="SMART" id="SM00421">
    <property type="entry name" value="HTH_LUXR"/>
    <property type="match status" value="1"/>
</dbReference>
<dbReference type="SUPFAM" id="SSF46894">
    <property type="entry name" value="C-terminal effector domain of the bipartite response regulators"/>
    <property type="match status" value="1"/>
</dbReference>
<dbReference type="SUPFAM" id="SSF75516">
    <property type="entry name" value="Pheromone-binding domain of LuxR-like quorum-sensing transcription factors"/>
    <property type="match status" value="1"/>
</dbReference>
<dbReference type="PROSITE" id="PS50043">
    <property type="entry name" value="HTH_LUXR_2"/>
    <property type="match status" value="1"/>
</dbReference>
<keyword id="KW-0010">Activator</keyword>
<keyword id="KW-0184">Conjugation</keyword>
<keyword id="KW-0238">DNA-binding</keyword>
<keyword id="KW-0614">Plasmid</keyword>
<keyword id="KW-0673">Quorum sensing</keyword>
<keyword id="KW-0804">Transcription</keyword>
<keyword id="KW-0805">Transcription regulation</keyword>
<comment type="function">
    <text>Positive regulation of conjugal transfer of Ti plasmids.</text>
</comment>
<comment type="similarity">
    <text evidence="2">Belongs to the autoinducer-regulated transcriptional regulatory protein family.</text>
</comment>
<accession>P33909</accession>
<sequence>MQHWLDKLTDLTAIEGDGCILKTGLADVADHFGFTGYAYLHIQHKHIIAVTNYHHDWRSLYFDKKFDALDPVVKRARSRKQVFAWSGEQERPKLSEEERAFYAQAADFGIRSGITIPIRTANGSMSMFTLASERTAIPLDREIDAVAAAAAVGQLHARISFLRITPTAEDAAWLDPKEATYLRWIAVGKTMEEIADVEEVKYNSVRVKLREAMKRFDVRSKAHLTALAIKRKLI</sequence>
<organism>
    <name type="scientific">Agrobacterium vitis</name>
    <name type="common">Rhizobium vitis</name>
    <dbReference type="NCBI Taxonomy" id="373"/>
    <lineage>
        <taxon>Bacteria</taxon>
        <taxon>Pseudomonadati</taxon>
        <taxon>Pseudomonadota</taxon>
        <taxon>Alphaproteobacteria</taxon>
        <taxon>Hyphomicrobiales</taxon>
        <taxon>Rhizobiaceae</taxon>
        <taxon>Rhizobium/Agrobacterium group</taxon>
        <taxon>Agrobacterium</taxon>
    </lineage>
</organism>
<reference key="1">
    <citation type="journal article" date="1994" name="Mol. Plant Microbe Interact.">
        <title>Natural instability of Agrobacterium vitis Ti plasmid due to unusual duplication of a 2.3-kb DNA fragment.</title>
        <authorList>
            <person name="Fournier P."/>
            <person name="de Ruffray P."/>
            <person name="Otten L."/>
        </authorList>
    </citation>
    <scope>NUCLEOTIDE SEQUENCE [GENOMIC DNA]</scope>
    <source>
        <strain>2608</strain>
    </source>
</reference>
<gene>
    <name type="primary">traR</name>
</gene>